<comment type="catalytic activity">
    <reaction evidence="1">
        <text>D-glucuronate = D-fructuronate</text>
        <dbReference type="Rhea" id="RHEA:13049"/>
        <dbReference type="ChEBI" id="CHEBI:58720"/>
        <dbReference type="ChEBI" id="CHEBI:59863"/>
        <dbReference type="EC" id="5.3.1.12"/>
    </reaction>
</comment>
<comment type="catalytic activity">
    <reaction evidence="1">
        <text>aldehydo-D-galacturonate = keto-D-tagaturonate</text>
        <dbReference type="Rhea" id="RHEA:27702"/>
        <dbReference type="ChEBI" id="CHEBI:12952"/>
        <dbReference type="ChEBI" id="CHEBI:17886"/>
        <dbReference type="EC" id="5.3.1.12"/>
    </reaction>
</comment>
<comment type="pathway">
    <text evidence="1">Carbohydrate metabolism; pentose and glucuronate interconversion.</text>
</comment>
<comment type="similarity">
    <text evidence="1">Belongs to the metallo-dependent hydrolases superfamily. Uronate isomerase family.</text>
</comment>
<proteinExistence type="inferred from homology"/>
<accession>B7LZZ6</accession>
<keyword id="KW-0413">Isomerase</keyword>
<reference key="1">
    <citation type="journal article" date="2009" name="PLoS Genet.">
        <title>Organised genome dynamics in the Escherichia coli species results in highly diverse adaptive paths.</title>
        <authorList>
            <person name="Touchon M."/>
            <person name="Hoede C."/>
            <person name="Tenaillon O."/>
            <person name="Barbe V."/>
            <person name="Baeriswyl S."/>
            <person name="Bidet P."/>
            <person name="Bingen E."/>
            <person name="Bonacorsi S."/>
            <person name="Bouchier C."/>
            <person name="Bouvet O."/>
            <person name="Calteau A."/>
            <person name="Chiapello H."/>
            <person name="Clermont O."/>
            <person name="Cruveiller S."/>
            <person name="Danchin A."/>
            <person name="Diard M."/>
            <person name="Dossat C."/>
            <person name="Karoui M.E."/>
            <person name="Frapy E."/>
            <person name="Garry L."/>
            <person name="Ghigo J.M."/>
            <person name="Gilles A.M."/>
            <person name="Johnson J."/>
            <person name="Le Bouguenec C."/>
            <person name="Lescat M."/>
            <person name="Mangenot S."/>
            <person name="Martinez-Jehanne V."/>
            <person name="Matic I."/>
            <person name="Nassif X."/>
            <person name="Oztas S."/>
            <person name="Petit M.A."/>
            <person name="Pichon C."/>
            <person name="Rouy Z."/>
            <person name="Ruf C.S."/>
            <person name="Schneider D."/>
            <person name="Tourret J."/>
            <person name="Vacherie B."/>
            <person name="Vallenet D."/>
            <person name="Medigue C."/>
            <person name="Rocha E.P.C."/>
            <person name="Denamur E."/>
        </authorList>
    </citation>
    <scope>NUCLEOTIDE SEQUENCE [LARGE SCALE GENOMIC DNA]</scope>
    <source>
        <strain>IAI1</strain>
    </source>
</reference>
<gene>
    <name evidence="1" type="primary">uxaC</name>
    <name type="ordered locus">ECIAI1_3238</name>
</gene>
<organism>
    <name type="scientific">Escherichia coli O8 (strain IAI1)</name>
    <dbReference type="NCBI Taxonomy" id="585034"/>
    <lineage>
        <taxon>Bacteria</taxon>
        <taxon>Pseudomonadati</taxon>
        <taxon>Pseudomonadota</taxon>
        <taxon>Gammaproteobacteria</taxon>
        <taxon>Enterobacterales</taxon>
        <taxon>Enterobacteriaceae</taxon>
        <taxon>Escherichia</taxon>
    </lineage>
</organism>
<dbReference type="EC" id="5.3.1.12" evidence="1"/>
<dbReference type="EMBL" id="CU928160">
    <property type="protein sequence ID" value="CAR00052.1"/>
    <property type="molecule type" value="Genomic_DNA"/>
</dbReference>
<dbReference type="RefSeq" id="WP_000187441.1">
    <property type="nucleotide sequence ID" value="NC_011741.1"/>
</dbReference>
<dbReference type="SMR" id="B7LZZ6"/>
<dbReference type="GeneID" id="75205101"/>
<dbReference type="KEGG" id="ecr:ECIAI1_3238"/>
<dbReference type="HOGENOM" id="CLU_044465_1_0_6"/>
<dbReference type="UniPathway" id="UPA00246"/>
<dbReference type="GO" id="GO:0008880">
    <property type="term" value="F:glucuronate isomerase activity"/>
    <property type="evidence" value="ECO:0007669"/>
    <property type="project" value="UniProtKB-UniRule"/>
</dbReference>
<dbReference type="GO" id="GO:0019698">
    <property type="term" value="P:D-galacturonate catabolic process"/>
    <property type="evidence" value="ECO:0007669"/>
    <property type="project" value="TreeGrafter"/>
</dbReference>
<dbReference type="GO" id="GO:0042840">
    <property type="term" value="P:D-glucuronate catabolic process"/>
    <property type="evidence" value="ECO:0007669"/>
    <property type="project" value="TreeGrafter"/>
</dbReference>
<dbReference type="FunFam" id="1.10.2020.10:FF:000001">
    <property type="entry name" value="Uronate isomerase"/>
    <property type="match status" value="1"/>
</dbReference>
<dbReference type="Gene3D" id="3.20.20.140">
    <property type="entry name" value="Metal-dependent hydrolases"/>
    <property type="match status" value="1"/>
</dbReference>
<dbReference type="Gene3D" id="1.10.2020.10">
    <property type="entry name" value="uronate isomerase, domain 2, chain A"/>
    <property type="match status" value="1"/>
</dbReference>
<dbReference type="HAMAP" id="MF_00675">
    <property type="entry name" value="UxaC"/>
    <property type="match status" value="1"/>
</dbReference>
<dbReference type="InterPro" id="IPR032466">
    <property type="entry name" value="Metal_Hydrolase"/>
</dbReference>
<dbReference type="InterPro" id="IPR003766">
    <property type="entry name" value="Uronate_isomerase"/>
</dbReference>
<dbReference type="NCBIfam" id="NF002794">
    <property type="entry name" value="PRK02925.1"/>
    <property type="match status" value="1"/>
</dbReference>
<dbReference type="PANTHER" id="PTHR30068">
    <property type="entry name" value="URONATE ISOMERASE"/>
    <property type="match status" value="1"/>
</dbReference>
<dbReference type="PANTHER" id="PTHR30068:SF4">
    <property type="entry name" value="URONATE ISOMERASE"/>
    <property type="match status" value="1"/>
</dbReference>
<dbReference type="Pfam" id="PF02614">
    <property type="entry name" value="UxaC"/>
    <property type="match status" value="1"/>
</dbReference>
<dbReference type="SUPFAM" id="SSF51556">
    <property type="entry name" value="Metallo-dependent hydrolases"/>
    <property type="match status" value="1"/>
</dbReference>
<evidence type="ECO:0000255" key="1">
    <source>
        <dbReference type="HAMAP-Rule" id="MF_00675"/>
    </source>
</evidence>
<sequence>MTPFMTEDFLLDTEFARRLYHDYAKDQPIFDYHCHLPPQQIAEDYRFKNLYDIWLKGDHYKWRAMRTNGVAERLCTGDASDREKFDAWAATVPHTIGNPLYHWTHLELRRPFGITGKLLSPSTADEIWNECNELLAQDNFSARGIMQQMNVKMVGTTDDPIDSLEHHAEIAKDGSFTIKVLPSWRPDKAFNIEQATFNDYMAKLGEVSDTDIRRFADLQTALTKRLDHFAAHGCKVSDHALDVVMFAEANEAELDSILARRLAGEPLSEHEVAQFKTAVLVFLGAEYARRGWVQQYHIGALRNNNLRQFKLLGPDVGFDSINDRPMAEELSKLLSKQNEENLLPKTILYCLNPRDNEVLGTMIGNFQGEGMPGKMQFGSGWWFNDQKDGMERQMTQLAQLGLLSRFVGMLTDSRSFLSYTRHEYFRRILCQMIGRWVEAGEAPADINLLGEMVKNICFNNARDYFAIELN</sequence>
<feature type="chain" id="PRO_1000131591" description="Uronate isomerase">
    <location>
        <begin position="1"/>
        <end position="470"/>
    </location>
</feature>
<name>UXAC_ECO8A</name>
<protein>
    <recommendedName>
        <fullName evidence="1">Uronate isomerase</fullName>
        <ecNumber evidence="1">5.3.1.12</ecNumber>
    </recommendedName>
    <alternativeName>
        <fullName evidence="1">Glucuronate isomerase</fullName>
    </alternativeName>
    <alternativeName>
        <fullName evidence="1">Uronic isomerase</fullName>
    </alternativeName>
</protein>